<gene>
    <name evidence="1" type="primary">rpmA</name>
    <name type="ordered locus">BLA_0289</name>
</gene>
<sequence>MAHKKGASSSRNGRDSNPQYLGVKKFGGEAVVAGNIIVRQRGTKFHAGKNVGVGKDHTLFALADGNVQFGVRRDRKVVDVVTE</sequence>
<proteinExistence type="inferred from homology"/>
<protein>
    <recommendedName>
        <fullName evidence="1">Large ribosomal subunit protein bL27</fullName>
    </recommendedName>
    <alternativeName>
        <fullName evidence="3">50S ribosomal protein L27</fullName>
    </alternativeName>
</protein>
<evidence type="ECO:0000255" key="1">
    <source>
        <dbReference type="HAMAP-Rule" id="MF_00539"/>
    </source>
</evidence>
<evidence type="ECO:0000256" key="2">
    <source>
        <dbReference type="SAM" id="MobiDB-lite"/>
    </source>
</evidence>
<evidence type="ECO:0000305" key="3"/>
<reference key="1">
    <citation type="journal article" date="2009" name="J. Bacteriol.">
        <title>Genome sequence of the probiotic bacterium Bifidobacterium animalis subsp. lactis AD011.</title>
        <authorList>
            <person name="Kim J.F."/>
            <person name="Jeong H."/>
            <person name="Yu D.S."/>
            <person name="Choi S.-H."/>
            <person name="Hur C.-G."/>
            <person name="Park M.-S."/>
            <person name="Yoon S.H."/>
            <person name="Kim D.-W."/>
            <person name="Ji G.E."/>
            <person name="Park H.-S."/>
            <person name="Oh T.K."/>
        </authorList>
    </citation>
    <scope>NUCLEOTIDE SEQUENCE [LARGE SCALE GENOMIC DNA]</scope>
    <source>
        <strain>AD011</strain>
    </source>
</reference>
<name>RL27_BIFA0</name>
<comment type="similarity">
    <text evidence="1">Belongs to the bacterial ribosomal protein bL27 family.</text>
</comment>
<feature type="chain" id="PRO_1000146509" description="Large ribosomal subunit protein bL27">
    <location>
        <begin position="1"/>
        <end position="83"/>
    </location>
</feature>
<feature type="region of interest" description="Disordered" evidence="2">
    <location>
        <begin position="1"/>
        <end position="20"/>
    </location>
</feature>
<feature type="compositionally biased region" description="Polar residues" evidence="2">
    <location>
        <begin position="7"/>
        <end position="19"/>
    </location>
</feature>
<keyword id="KW-1185">Reference proteome</keyword>
<keyword id="KW-0687">Ribonucleoprotein</keyword>
<keyword id="KW-0689">Ribosomal protein</keyword>
<accession>B8DVU0</accession>
<dbReference type="EMBL" id="CP001213">
    <property type="protein sequence ID" value="ACL28591.1"/>
    <property type="molecule type" value="Genomic_DNA"/>
</dbReference>
<dbReference type="RefSeq" id="WP_004268424.1">
    <property type="nucleotide sequence ID" value="NC_011835.1"/>
</dbReference>
<dbReference type="SMR" id="B8DVU0"/>
<dbReference type="STRING" id="442563.BLA_0289"/>
<dbReference type="GeneID" id="29696423"/>
<dbReference type="KEGG" id="bla:BLA_0289"/>
<dbReference type="HOGENOM" id="CLU_095424_4_0_11"/>
<dbReference type="Proteomes" id="UP000002456">
    <property type="component" value="Chromosome"/>
</dbReference>
<dbReference type="GO" id="GO:0022625">
    <property type="term" value="C:cytosolic large ribosomal subunit"/>
    <property type="evidence" value="ECO:0007669"/>
    <property type="project" value="TreeGrafter"/>
</dbReference>
<dbReference type="GO" id="GO:0003735">
    <property type="term" value="F:structural constituent of ribosome"/>
    <property type="evidence" value="ECO:0007669"/>
    <property type="project" value="InterPro"/>
</dbReference>
<dbReference type="GO" id="GO:0006412">
    <property type="term" value="P:translation"/>
    <property type="evidence" value="ECO:0007669"/>
    <property type="project" value="UniProtKB-UniRule"/>
</dbReference>
<dbReference type="FunFam" id="2.40.50.100:FF:000020">
    <property type="entry name" value="50S ribosomal protein L27"/>
    <property type="match status" value="1"/>
</dbReference>
<dbReference type="Gene3D" id="2.40.50.100">
    <property type="match status" value="1"/>
</dbReference>
<dbReference type="HAMAP" id="MF_00539">
    <property type="entry name" value="Ribosomal_bL27"/>
    <property type="match status" value="1"/>
</dbReference>
<dbReference type="InterPro" id="IPR001684">
    <property type="entry name" value="Ribosomal_bL27"/>
</dbReference>
<dbReference type="InterPro" id="IPR018261">
    <property type="entry name" value="Ribosomal_bL27_CS"/>
</dbReference>
<dbReference type="NCBIfam" id="TIGR00062">
    <property type="entry name" value="L27"/>
    <property type="match status" value="1"/>
</dbReference>
<dbReference type="PANTHER" id="PTHR15893:SF0">
    <property type="entry name" value="LARGE RIBOSOMAL SUBUNIT PROTEIN BL27M"/>
    <property type="match status" value="1"/>
</dbReference>
<dbReference type="PANTHER" id="PTHR15893">
    <property type="entry name" value="RIBOSOMAL PROTEIN L27"/>
    <property type="match status" value="1"/>
</dbReference>
<dbReference type="Pfam" id="PF01016">
    <property type="entry name" value="Ribosomal_L27"/>
    <property type="match status" value="1"/>
</dbReference>
<dbReference type="PRINTS" id="PR00063">
    <property type="entry name" value="RIBOSOMALL27"/>
</dbReference>
<dbReference type="SUPFAM" id="SSF110324">
    <property type="entry name" value="Ribosomal L27 protein-like"/>
    <property type="match status" value="1"/>
</dbReference>
<dbReference type="PROSITE" id="PS00831">
    <property type="entry name" value="RIBOSOMAL_L27"/>
    <property type="match status" value="1"/>
</dbReference>
<organism>
    <name type="scientific">Bifidobacterium animalis subsp. lactis (strain AD011)</name>
    <dbReference type="NCBI Taxonomy" id="442563"/>
    <lineage>
        <taxon>Bacteria</taxon>
        <taxon>Bacillati</taxon>
        <taxon>Actinomycetota</taxon>
        <taxon>Actinomycetes</taxon>
        <taxon>Bifidobacteriales</taxon>
        <taxon>Bifidobacteriaceae</taxon>
        <taxon>Bifidobacterium</taxon>
    </lineage>
</organism>